<dbReference type="EMBL" id="AB297928">
    <property type="protein sequence ID" value="BAF80153.1"/>
    <property type="molecule type" value="mRNA"/>
</dbReference>
<dbReference type="EMBL" id="AC104321">
    <property type="protein sequence ID" value="AAO37538.1"/>
    <property type="molecule type" value="Genomic_DNA"/>
</dbReference>
<dbReference type="EMBL" id="DP000009">
    <property type="protein sequence ID" value="ABF99382.1"/>
    <property type="molecule type" value="Genomic_DNA"/>
</dbReference>
<dbReference type="EMBL" id="AP008209">
    <property type="protein sequence ID" value="BAF13497.2"/>
    <property type="status" value="ALT_SEQ"/>
    <property type="molecule type" value="Genomic_DNA"/>
</dbReference>
<dbReference type="EMBL" id="AP014959">
    <property type="protein sequence ID" value="BAS86885.1"/>
    <property type="molecule type" value="Genomic_DNA"/>
</dbReference>
<dbReference type="RefSeq" id="XP_015629235.1">
    <property type="nucleotide sequence ID" value="XM_015773749.1"/>
</dbReference>
<dbReference type="SMR" id="Q851R2"/>
<dbReference type="FunCoup" id="Q851R2">
    <property type="interactions" value="2041"/>
</dbReference>
<dbReference type="STRING" id="39947.Q851R2"/>
<dbReference type="PaxDb" id="39947-Q851R2"/>
<dbReference type="EnsemblPlants" id="Os03t0800200-01">
    <property type="protein sequence ID" value="Os03t0800200-01"/>
    <property type="gene ID" value="Os03g0800200"/>
</dbReference>
<dbReference type="Gramene" id="Os03t0800200-01">
    <property type="protein sequence ID" value="Os03t0800200-01"/>
    <property type="gene ID" value="Os03g0800200"/>
</dbReference>
<dbReference type="KEGG" id="dosa:Os03g0800200"/>
<dbReference type="eggNOG" id="KOG1041">
    <property type="taxonomic scope" value="Eukaryota"/>
</dbReference>
<dbReference type="HOGENOM" id="CLU_004544_0_1_1"/>
<dbReference type="InParanoid" id="Q851R2"/>
<dbReference type="OMA" id="RVRITHI"/>
<dbReference type="OrthoDB" id="10252740at2759"/>
<dbReference type="Proteomes" id="UP000000763">
    <property type="component" value="Chromosome 3"/>
</dbReference>
<dbReference type="Proteomes" id="UP000059680">
    <property type="component" value="Chromosome 3"/>
</dbReference>
<dbReference type="GO" id="GO:0005737">
    <property type="term" value="C:cytoplasm"/>
    <property type="evidence" value="ECO:0000318"/>
    <property type="project" value="GO_Central"/>
</dbReference>
<dbReference type="GO" id="GO:0005730">
    <property type="term" value="C:nucleolus"/>
    <property type="evidence" value="ECO:0000315"/>
    <property type="project" value="Gramene"/>
</dbReference>
<dbReference type="GO" id="GO:0005731">
    <property type="term" value="C:nucleolus organizer region"/>
    <property type="evidence" value="ECO:0000315"/>
    <property type="project" value="Gramene"/>
</dbReference>
<dbReference type="GO" id="GO:0005634">
    <property type="term" value="C:nucleus"/>
    <property type="evidence" value="ECO:0000318"/>
    <property type="project" value="GO_Central"/>
</dbReference>
<dbReference type="GO" id="GO:0003723">
    <property type="term" value="F:RNA binding"/>
    <property type="evidence" value="ECO:0000318"/>
    <property type="project" value="GO_Central"/>
</dbReference>
<dbReference type="GO" id="GO:0004521">
    <property type="term" value="F:RNA endonuclease activity"/>
    <property type="evidence" value="ECO:0000318"/>
    <property type="project" value="GO_Central"/>
</dbReference>
<dbReference type="GO" id="GO:0007143">
    <property type="term" value="P:female meiotic nuclear division"/>
    <property type="evidence" value="ECO:0000315"/>
    <property type="project" value="Gramene"/>
</dbReference>
<dbReference type="GO" id="GO:0007140">
    <property type="term" value="P:male meiotic nuclear division"/>
    <property type="evidence" value="ECO:0000315"/>
    <property type="project" value="Gramene"/>
</dbReference>
<dbReference type="GO" id="GO:0009561">
    <property type="term" value="P:megagametogenesis"/>
    <property type="evidence" value="ECO:0000315"/>
    <property type="project" value="Gramene"/>
</dbReference>
<dbReference type="GO" id="GO:0055046">
    <property type="term" value="P:microgametogenesis"/>
    <property type="evidence" value="ECO:0000315"/>
    <property type="project" value="Gramene"/>
</dbReference>
<dbReference type="GO" id="GO:1903343">
    <property type="term" value="P:positive regulation of meiotic DNA double-strand break formation"/>
    <property type="evidence" value="ECO:0000315"/>
    <property type="project" value="CACAO"/>
</dbReference>
<dbReference type="GO" id="GO:0010468">
    <property type="term" value="P:regulation of gene expression"/>
    <property type="evidence" value="ECO:0000315"/>
    <property type="project" value="Gramene"/>
</dbReference>
<dbReference type="GO" id="GO:0031047">
    <property type="term" value="P:regulatory ncRNA-mediated gene silencing"/>
    <property type="evidence" value="ECO:0000318"/>
    <property type="project" value="GO_Central"/>
</dbReference>
<dbReference type="CDD" id="cd02846">
    <property type="entry name" value="PAZ_argonaute_like"/>
    <property type="match status" value="1"/>
</dbReference>
<dbReference type="CDD" id="cd04657">
    <property type="entry name" value="Piwi_ago-like"/>
    <property type="match status" value="1"/>
</dbReference>
<dbReference type="FunFam" id="3.40.50.2300:FF:000110">
    <property type="entry name" value="Argonaute 10"/>
    <property type="match status" value="1"/>
</dbReference>
<dbReference type="FunFam" id="3.30.420.10:FF:000013">
    <property type="entry name" value="protein argonaute 10-like"/>
    <property type="match status" value="1"/>
</dbReference>
<dbReference type="FunFam" id="2.170.260.10:FF:000001">
    <property type="entry name" value="Protein argonaute-2"/>
    <property type="match status" value="1"/>
</dbReference>
<dbReference type="Gene3D" id="3.40.50.2300">
    <property type="match status" value="1"/>
</dbReference>
<dbReference type="Gene3D" id="2.170.260.10">
    <property type="entry name" value="paz domain"/>
    <property type="match status" value="1"/>
</dbReference>
<dbReference type="Gene3D" id="3.30.420.10">
    <property type="entry name" value="Ribonuclease H-like superfamily/Ribonuclease H"/>
    <property type="match status" value="1"/>
</dbReference>
<dbReference type="InterPro" id="IPR014811">
    <property type="entry name" value="ArgoL1"/>
</dbReference>
<dbReference type="InterPro" id="IPR032472">
    <property type="entry name" value="ArgoL2"/>
</dbReference>
<dbReference type="InterPro" id="IPR032473">
    <property type="entry name" value="Argonaute_Mid_dom"/>
</dbReference>
<dbReference type="InterPro" id="IPR032474">
    <property type="entry name" value="Argonaute_N"/>
</dbReference>
<dbReference type="InterPro" id="IPR003100">
    <property type="entry name" value="PAZ_dom"/>
</dbReference>
<dbReference type="InterPro" id="IPR036085">
    <property type="entry name" value="PAZ_dom_sf"/>
</dbReference>
<dbReference type="InterPro" id="IPR003165">
    <property type="entry name" value="Piwi"/>
</dbReference>
<dbReference type="InterPro" id="IPR045246">
    <property type="entry name" value="Piwi_ago-like"/>
</dbReference>
<dbReference type="InterPro" id="IPR012337">
    <property type="entry name" value="RNaseH-like_sf"/>
</dbReference>
<dbReference type="InterPro" id="IPR036397">
    <property type="entry name" value="RNaseH_sf"/>
</dbReference>
<dbReference type="PANTHER" id="PTHR22891">
    <property type="entry name" value="EUKARYOTIC TRANSLATION INITIATION FACTOR 2C"/>
    <property type="match status" value="1"/>
</dbReference>
<dbReference type="Pfam" id="PF08699">
    <property type="entry name" value="ArgoL1"/>
    <property type="match status" value="1"/>
</dbReference>
<dbReference type="Pfam" id="PF16488">
    <property type="entry name" value="ArgoL2"/>
    <property type="match status" value="1"/>
</dbReference>
<dbReference type="Pfam" id="PF16487">
    <property type="entry name" value="ArgoMid"/>
    <property type="match status" value="1"/>
</dbReference>
<dbReference type="Pfam" id="PF16486">
    <property type="entry name" value="ArgoN"/>
    <property type="match status" value="1"/>
</dbReference>
<dbReference type="Pfam" id="PF02170">
    <property type="entry name" value="PAZ"/>
    <property type="match status" value="1"/>
</dbReference>
<dbReference type="Pfam" id="PF02171">
    <property type="entry name" value="Piwi"/>
    <property type="match status" value="1"/>
</dbReference>
<dbReference type="SMART" id="SM01163">
    <property type="entry name" value="DUF1785"/>
    <property type="match status" value="1"/>
</dbReference>
<dbReference type="SMART" id="SM00949">
    <property type="entry name" value="PAZ"/>
    <property type="match status" value="1"/>
</dbReference>
<dbReference type="SMART" id="SM00950">
    <property type="entry name" value="Piwi"/>
    <property type="match status" value="1"/>
</dbReference>
<dbReference type="SUPFAM" id="SSF101690">
    <property type="entry name" value="PAZ domain"/>
    <property type="match status" value="1"/>
</dbReference>
<dbReference type="SUPFAM" id="SSF53098">
    <property type="entry name" value="Ribonuclease H-like"/>
    <property type="match status" value="1"/>
</dbReference>
<dbReference type="PROSITE" id="PS50821">
    <property type="entry name" value="PAZ"/>
    <property type="match status" value="1"/>
</dbReference>
<dbReference type="PROSITE" id="PS50822">
    <property type="entry name" value="PIWI"/>
    <property type="match status" value="1"/>
</dbReference>
<proteinExistence type="evidence at transcript level"/>
<evidence type="ECO:0000255" key="1">
    <source>
        <dbReference type="PROSITE-ProRule" id="PRU00142"/>
    </source>
</evidence>
<evidence type="ECO:0000255" key="2">
    <source>
        <dbReference type="PROSITE-ProRule" id="PRU00150"/>
    </source>
</evidence>
<evidence type="ECO:0000256" key="3">
    <source>
        <dbReference type="SAM" id="MobiDB-lite"/>
    </source>
</evidence>
<evidence type="ECO:0000269" key="4">
    <source>
    </source>
</evidence>
<evidence type="ECO:0000305" key="5"/>
<accession>Q851R2</accession>
<accession>A0A0P0W4J0</accession>
<accession>Q0DMP1</accession>
<sequence>MAYRGGGRGGRGGEQRPPYSGRGDVPGRGGGGGGGGAPPYRPASGFVWPPPGMTPRPGPPQPQYPRPGPPAVVYGAPMPAAHHQGAYQPGGVYRAPSPGVPVIGGYARSTPVTIRAPPPSHSSAPAPYQPAAAAPAPSSSSTAPSATALAKEFEQKLFVSETALAPPAAVASAAAAPAGEASVESDKDLAPVSKKGLAHPARPGFGAAGKKVMIRANHFLVNVADNNLFHYDVSINPESKSRATNREVLNELIKLHGKTSLGGKLPAYDGRKSLYTAGSLPFESEEFVVKLIDPEKKDKERAEREYKITIRIAGRTDLYHLQQFLLGRQRDMPQETIQVLDVVLRESPSWNYVTVSRSFFSTQFGHRGDIGEGLECWRGYYQSLRPTQMGLSLNIDISATSFFKPVTVIQFVEEFLNIRDTSRPLSDRDRVKIKKALRGVRIETNHQEDQIRRYKITGITPIPMSQLIFPVDDNGTRKTVVQYFWDRYNYRLKYASWPCLQSGSDSRPVYLPMEVCKIVEGQRYSKKLNDKQVTNILRATCQRPQQREQSIHEMVLHNKYTEDRFAQEFGIKVCNDLVSVPARVLPPPMLKYHDSGREKTCAPSVGQWNMINKKMINGGTVDNWTCLSFSRMRPEEVQRFCGDLIQMCNATGMSFNPRPVVDVRSTNPNNIENALRDVHRRTSELLAREGKGGLQLLIVILPEVSGSYGKIKRVCETDLGIVSQCCLPRHASRPNKQYLENVALKINVKVGGRNTVLERAFIRNGIPFVSEVPTIIFGADVTHPPPGEDSASSIAAVVASMDWPEITKYRGLVSAQPHRQEIIEDLFSVGKDPVKVVNGGMIRELLIAFRKKTGRRPERIIFYRDGVSEGQFSHVLLHEMDAIRKACASLEEGYLPPVTFVVVQKRHHTRLFPEVHGRRDMTDKSGNILPGTVVDRQICHPTEFDFYLCSHAGIQGTSRPTHYHVLYDENHFTADALQSLTNNLCYTYARCTRAVSVVPPAYYAHLAAFRARYYVEGESSDGGSTPGSSGQAVAREGPVEVRQLPKIKENVKDVMFYC</sequence>
<name>MEL1_ORYSJ</name>
<organism>
    <name type="scientific">Oryza sativa subsp. japonica</name>
    <name type="common">Rice</name>
    <dbReference type="NCBI Taxonomy" id="39947"/>
    <lineage>
        <taxon>Eukaryota</taxon>
        <taxon>Viridiplantae</taxon>
        <taxon>Streptophyta</taxon>
        <taxon>Embryophyta</taxon>
        <taxon>Tracheophyta</taxon>
        <taxon>Spermatophyta</taxon>
        <taxon>Magnoliopsida</taxon>
        <taxon>Liliopsida</taxon>
        <taxon>Poales</taxon>
        <taxon>Poaceae</taxon>
        <taxon>BOP clade</taxon>
        <taxon>Oryzoideae</taxon>
        <taxon>Oryzeae</taxon>
        <taxon>Oryzinae</taxon>
        <taxon>Oryza</taxon>
        <taxon>Oryza sativa</taxon>
    </lineage>
</organism>
<feature type="chain" id="PRO_0000378442" description="Protein argonaute MEL1">
    <location>
        <begin position="1"/>
        <end position="1058"/>
    </location>
</feature>
<feature type="domain" description="PAZ" evidence="1">
    <location>
        <begin position="407"/>
        <end position="520"/>
    </location>
</feature>
<feature type="domain" description="Piwi" evidence="2">
    <location>
        <begin position="696"/>
        <end position="1016"/>
    </location>
</feature>
<feature type="region of interest" description="Disordered" evidence="3">
    <location>
        <begin position="1"/>
        <end position="77"/>
    </location>
</feature>
<feature type="region of interest" description="Disordered" evidence="3">
    <location>
        <begin position="115"/>
        <end position="147"/>
    </location>
</feature>
<feature type="compositionally biased region" description="Gly residues" evidence="3">
    <location>
        <begin position="1"/>
        <end position="12"/>
    </location>
</feature>
<feature type="compositionally biased region" description="Gly residues" evidence="3">
    <location>
        <begin position="24"/>
        <end position="37"/>
    </location>
</feature>
<feature type="compositionally biased region" description="Pro residues" evidence="3">
    <location>
        <begin position="48"/>
        <end position="70"/>
    </location>
</feature>
<feature type="compositionally biased region" description="Low complexity" evidence="3">
    <location>
        <begin position="121"/>
        <end position="147"/>
    </location>
</feature>
<protein>
    <recommendedName>
        <fullName>Protein argonaute MEL1</fullName>
    </recommendedName>
    <alternativeName>
        <fullName>Protein MEIOSIS ARRESTED AT LEPTOTENE 1</fullName>
        <shortName>OsMEL1</shortName>
    </alternativeName>
</protein>
<reference key="1">
    <citation type="journal article" date="2007" name="Plant Cell">
        <title>A germ cell specific gene of the ARGONAUTE family is essential for the progression of premeiotic mitosis and meiosis during sporogenesis in rice.</title>
        <authorList>
            <person name="Nonomura K."/>
            <person name="Morohoshi A."/>
            <person name="Nakano M."/>
            <person name="Eiguchi M."/>
            <person name="Miyao A."/>
            <person name="Hirochika H."/>
            <person name="Kurata N."/>
        </authorList>
    </citation>
    <scope>NUCLEOTIDE SEQUENCE [MRNA]</scope>
    <scope>FUNCTION</scope>
    <scope>DEVELOPMENTAL STAGE</scope>
    <scope>DISRUPTION PHENOTYPE</scope>
    <source>
        <strain>cv. Nipponbare</strain>
        <tissue>Flower</tissue>
    </source>
</reference>
<reference key="2">
    <citation type="journal article" date="2005" name="Genome Res.">
        <title>Sequence, annotation, and analysis of synteny between rice chromosome 3 and diverged grass species.</title>
        <authorList>
            <consortium name="The rice chromosome 3 sequencing consortium"/>
            <person name="Buell C.R."/>
            <person name="Yuan Q."/>
            <person name="Ouyang S."/>
            <person name="Liu J."/>
            <person name="Zhu W."/>
            <person name="Wang A."/>
            <person name="Maiti R."/>
            <person name="Haas B."/>
            <person name="Wortman J."/>
            <person name="Pertea M."/>
            <person name="Jones K.M."/>
            <person name="Kim M."/>
            <person name="Overton L."/>
            <person name="Tsitrin T."/>
            <person name="Fadrosh D."/>
            <person name="Bera J."/>
            <person name="Weaver B."/>
            <person name="Jin S."/>
            <person name="Johri S."/>
            <person name="Reardon M."/>
            <person name="Webb K."/>
            <person name="Hill J."/>
            <person name="Moffat K."/>
            <person name="Tallon L."/>
            <person name="Van Aken S."/>
            <person name="Lewis M."/>
            <person name="Utterback T."/>
            <person name="Feldblyum T."/>
            <person name="Zismann V."/>
            <person name="Iobst S."/>
            <person name="Hsiao J."/>
            <person name="de Vazeille A.R."/>
            <person name="Salzberg S.L."/>
            <person name="White O."/>
            <person name="Fraser C.M."/>
            <person name="Yu Y."/>
            <person name="Kim H."/>
            <person name="Rambo T."/>
            <person name="Currie J."/>
            <person name="Collura K."/>
            <person name="Kernodle-Thompson S."/>
            <person name="Wei F."/>
            <person name="Kudrna K."/>
            <person name="Ammiraju J.S.S."/>
            <person name="Luo M."/>
            <person name="Goicoechea J.L."/>
            <person name="Wing R.A."/>
            <person name="Henry D."/>
            <person name="Oates R."/>
            <person name="Palmer M."/>
            <person name="Pries G."/>
            <person name="Saski C."/>
            <person name="Simmons J."/>
            <person name="Soderlund C."/>
            <person name="Nelson W."/>
            <person name="de la Bastide M."/>
            <person name="Spiegel L."/>
            <person name="Nascimento L."/>
            <person name="Huang E."/>
            <person name="Preston R."/>
            <person name="Zutavern T."/>
            <person name="Palmer L."/>
            <person name="O'Shaughnessy A."/>
            <person name="Dike S."/>
            <person name="McCombie W.R."/>
            <person name="Minx P."/>
            <person name="Cordum H."/>
            <person name="Wilson R."/>
            <person name="Jin W."/>
            <person name="Lee H.R."/>
            <person name="Jiang J."/>
            <person name="Jackson S."/>
        </authorList>
    </citation>
    <scope>NUCLEOTIDE SEQUENCE [LARGE SCALE GENOMIC DNA]</scope>
    <source>
        <strain>cv. Nipponbare</strain>
    </source>
</reference>
<reference key="3">
    <citation type="journal article" date="2005" name="Nature">
        <title>The map-based sequence of the rice genome.</title>
        <authorList>
            <consortium name="International rice genome sequencing project (IRGSP)"/>
        </authorList>
    </citation>
    <scope>NUCLEOTIDE SEQUENCE [LARGE SCALE GENOMIC DNA]</scope>
    <source>
        <strain>cv. Nipponbare</strain>
    </source>
</reference>
<reference key="4">
    <citation type="journal article" date="2008" name="Nucleic Acids Res.">
        <title>The rice annotation project database (RAP-DB): 2008 update.</title>
        <authorList>
            <consortium name="The rice annotation project (RAP)"/>
        </authorList>
    </citation>
    <scope>GENOME REANNOTATION</scope>
    <source>
        <strain>cv. Nipponbare</strain>
    </source>
</reference>
<reference key="5">
    <citation type="journal article" date="2013" name="Rice">
        <title>Improvement of the Oryza sativa Nipponbare reference genome using next generation sequence and optical map data.</title>
        <authorList>
            <person name="Kawahara Y."/>
            <person name="de la Bastide M."/>
            <person name="Hamilton J.P."/>
            <person name="Kanamori H."/>
            <person name="McCombie W.R."/>
            <person name="Ouyang S."/>
            <person name="Schwartz D.C."/>
            <person name="Tanaka T."/>
            <person name="Wu J."/>
            <person name="Zhou S."/>
            <person name="Childs K.L."/>
            <person name="Davidson R.M."/>
            <person name="Lin H."/>
            <person name="Quesada-Ocampo L."/>
            <person name="Vaillancourt B."/>
            <person name="Sakai H."/>
            <person name="Lee S.S."/>
            <person name="Kim J."/>
            <person name="Numa H."/>
            <person name="Itoh T."/>
            <person name="Buell C.R."/>
            <person name="Matsumoto T."/>
        </authorList>
    </citation>
    <scope>GENOME REANNOTATION</scope>
    <source>
        <strain>cv. Nipponbare</strain>
    </source>
</reference>
<reference key="6">
    <citation type="journal article" date="2008" name="BMC Genomics">
        <title>Genome-wide identification, organization and phylogenetic analysis of dicer-like, argonaute and RNA-dependent RNA polymerase gene families and their expression analysis during reproductive development and stress in rice.</title>
        <authorList>
            <person name="Kapoor M."/>
            <person name="Arora R."/>
            <person name="Lama T."/>
            <person name="Nijhawan A."/>
            <person name="Khurana J.P."/>
            <person name="Tyagi A.K."/>
            <person name="Kapoor S."/>
        </authorList>
    </citation>
    <scope>GENE FAMILY</scope>
    <scope>NOMENCLATURE</scope>
</reference>
<keyword id="KW-0469">Meiosis</keyword>
<keyword id="KW-0539">Nucleus</keyword>
<keyword id="KW-1185">Reference proteome</keyword>
<keyword id="KW-0943">RNA-mediated gene silencing</keyword>
<gene>
    <name type="primary">MEL1</name>
    <name type="synonym">MEAL1</name>
    <name type="ordered locus">Os03g0800200</name>
    <name type="ordered locus">LOC_Os03g58600</name>
    <name type="ORF">OSJNBa0052F07.11</name>
</gene>
<comment type="function">
    <text evidence="4">Essential for the progression of premeiotic mitosis and meiosis during sporogenesis. Regulates the cell division of premeiotic germ cells, the proper modification of meiotic chromosomes, and the faithful progression of meiosis, probably via small RNA-mediated gene silencing. May be involved in histone H3 'Lys-9' demethylation in the pericentromeric region.</text>
</comment>
<comment type="subcellular location">
    <subcellularLocation>
        <location evidence="5">Nucleus</location>
        <location evidence="5">Nucleolus</location>
    </subcellularLocation>
</comment>
<comment type="developmental stage">
    <text evidence="4">Expressed specifically in male and female archesporial cells and sporogenous cells (SC) before meiosis but not in the nursery cells supporting SC.</text>
</comment>
<comment type="disruption phenotype">
    <text evidence="4">Arrest of meiosis in male and female germ cells, causing seed sterility.</text>
</comment>
<comment type="similarity">
    <text evidence="5">Belongs to the argonaute family. Ago subfamily.</text>
</comment>
<comment type="sequence caution" evidence="5">
    <conflict type="erroneous gene model prediction">
        <sequence resource="EMBL-CDS" id="BAF13497"/>
    </conflict>
</comment>